<feature type="chain" id="PRO_1000087287" description="Hydroxyacylglutathione hydrolase">
    <location>
        <begin position="1"/>
        <end position="251"/>
    </location>
</feature>
<feature type="binding site" evidence="1">
    <location>
        <position position="53"/>
    </location>
    <ligand>
        <name>Zn(2+)</name>
        <dbReference type="ChEBI" id="CHEBI:29105"/>
        <label>1</label>
    </ligand>
</feature>
<feature type="binding site" evidence="1">
    <location>
        <position position="55"/>
    </location>
    <ligand>
        <name>Zn(2+)</name>
        <dbReference type="ChEBI" id="CHEBI:29105"/>
        <label>1</label>
    </ligand>
</feature>
<feature type="binding site" evidence="1">
    <location>
        <position position="57"/>
    </location>
    <ligand>
        <name>Zn(2+)</name>
        <dbReference type="ChEBI" id="CHEBI:29105"/>
        <label>2</label>
    </ligand>
</feature>
<feature type="binding site" evidence="1">
    <location>
        <position position="58"/>
    </location>
    <ligand>
        <name>Zn(2+)</name>
        <dbReference type="ChEBI" id="CHEBI:29105"/>
        <label>2</label>
    </ligand>
</feature>
<feature type="binding site" evidence="1">
    <location>
        <position position="110"/>
    </location>
    <ligand>
        <name>Zn(2+)</name>
        <dbReference type="ChEBI" id="CHEBI:29105"/>
        <label>1</label>
    </ligand>
</feature>
<feature type="binding site" evidence="1">
    <location>
        <position position="127"/>
    </location>
    <ligand>
        <name>Zn(2+)</name>
        <dbReference type="ChEBI" id="CHEBI:29105"/>
        <label>1</label>
    </ligand>
</feature>
<feature type="binding site" evidence="1">
    <location>
        <position position="127"/>
    </location>
    <ligand>
        <name>Zn(2+)</name>
        <dbReference type="ChEBI" id="CHEBI:29105"/>
        <label>2</label>
    </ligand>
</feature>
<feature type="binding site" evidence="1">
    <location>
        <position position="165"/>
    </location>
    <ligand>
        <name>Zn(2+)</name>
        <dbReference type="ChEBI" id="CHEBI:29105"/>
        <label>2</label>
    </ligand>
</feature>
<reference key="1">
    <citation type="submission" date="2007-11" db="EMBL/GenBank/DDBJ databases">
        <authorList>
            <consortium name="The Salmonella enterica serovar Paratyphi B Genome Sequencing Project"/>
            <person name="McClelland M."/>
            <person name="Sanderson E.K."/>
            <person name="Porwollik S."/>
            <person name="Spieth J."/>
            <person name="Clifton W.S."/>
            <person name="Fulton R."/>
            <person name="Cordes M."/>
            <person name="Wollam A."/>
            <person name="Shah N."/>
            <person name="Pepin K."/>
            <person name="Bhonagiri V."/>
            <person name="Nash W."/>
            <person name="Johnson M."/>
            <person name="Thiruvilangam P."/>
            <person name="Wilson R."/>
        </authorList>
    </citation>
    <scope>NUCLEOTIDE SEQUENCE [LARGE SCALE GENOMIC DNA]</scope>
    <source>
        <strain>ATCC BAA-1250 / SPB7</strain>
    </source>
</reference>
<comment type="function">
    <text evidence="1">Thiolesterase that catalyzes the hydrolysis of S-D-lactoyl-glutathione to form glutathione and D-lactic acid.</text>
</comment>
<comment type="catalytic activity">
    <reaction evidence="1">
        <text>an S-(2-hydroxyacyl)glutathione + H2O = a 2-hydroxy carboxylate + glutathione + H(+)</text>
        <dbReference type="Rhea" id="RHEA:21864"/>
        <dbReference type="ChEBI" id="CHEBI:15377"/>
        <dbReference type="ChEBI" id="CHEBI:15378"/>
        <dbReference type="ChEBI" id="CHEBI:57925"/>
        <dbReference type="ChEBI" id="CHEBI:58896"/>
        <dbReference type="ChEBI" id="CHEBI:71261"/>
        <dbReference type="EC" id="3.1.2.6"/>
    </reaction>
</comment>
<comment type="cofactor">
    <cofactor evidence="1">
        <name>Zn(2+)</name>
        <dbReference type="ChEBI" id="CHEBI:29105"/>
    </cofactor>
    <text evidence="1">Binds 2 Zn(2+) ions per subunit.</text>
</comment>
<comment type="pathway">
    <text evidence="1">Secondary metabolite metabolism; methylglyoxal degradation; (R)-lactate from methylglyoxal: step 2/2.</text>
</comment>
<comment type="subunit">
    <text evidence="1">Monomer.</text>
</comment>
<comment type="similarity">
    <text evidence="1">Belongs to the metallo-beta-lactamase superfamily. Glyoxalase II family.</text>
</comment>
<evidence type="ECO:0000255" key="1">
    <source>
        <dbReference type="HAMAP-Rule" id="MF_01374"/>
    </source>
</evidence>
<gene>
    <name evidence="1" type="primary">gloB</name>
    <name type="ordered locus">SPAB_03353</name>
</gene>
<proteinExistence type="inferred from homology"/>
<keyword id="KW-0378">Hydrolase</keyword>
<keyword id="KW-0479">Metal-binding</keyword>
<keyword id="KW-0862">Zinc</keyword>
<organism>
    <name type="scientific">Salmonella paratyphi B (strain ATCC BAA-1250 / SPB7)</name>
    <dbReference type="NCBI Taxonomy" id="1016998"/>
    <lineage>
        <taxon>Bacteria</taxon>
        <taxon>Pseudomonadati</taxon>
        <taxon>Pseudomonadota</taxon>
        <taxon>Gammaproteobacteria</taxon>
        <taxon>Enterobacterales</taxon>
        <taxon>Enterobacteriaceae</taxon>
        <taxon>Salmonella</taxon>
    </lineage>
</organism>
<name>GLO2_SALPB</name>
<protein>
    <recommendedName>
        <fullName evidence="1">Hydroxyacylglutathione hydrolase</fullName>
        <ecNumber evidence="1">3.1.2.6</ecNumber>
    </recommendedName>
    <alternativeName>
        <fullName evidence="1">Glyoxalase II</fullName>
        <shortName evidence="1">Glx II</shortName>
    </alternativeName>
</protein>
<sequence>MNLNSIPAFQDNYIWVLTNDEGRCVIVDPGEAAPVLKAIAEHKWMPEAIFLTHHHHDHVGGVKELLQHFPQMTVYGPAETQDKGATHLVGDGDTIRVLGEKFTLFATPGHTLGHVCYFSHPYLFCGDTLFSGGCGRLFEGTPSQMYQSLMKINSLPDDTLICCAHEYTLANIKFALSILPHDSFINEYYRKVKELRVKKQMTLPVILKNERKINLFLRTEDIDLINEINKETILQQPEARFAWLRSKKDTF</sequence>
<dbReference type="EC" id="3.1.2.6" evidence="1"/>
<dbReference type="EMBL" id="CP000886">
    <property type="protein sequence ID" value="ABX68710.1"/>
    <property type="molecule type" value="Genomic_DNA"/>
</dbReference>
<dbReference type="RefSeq" id="WP_001052773.1">
    <property type="nucleotide sequence ID" value="NC_010102.1"/>
</dbReference>
<dbReference type="SMR" id="A9MZ21"/>
<dbReference type="KEGG" id="spq:SPAB_03353"/>
<dbReference type="PATRIC" id="fig|1016998.12.peg.3166"/>
<dbReference type="HOGENOM" id="CLU_030571_4_1_6"/>
<dbReference type="BioCyc" id="SENT1016998:SPAB_RS13710-MONOMER"/>
<dbReference type="UniPathway" id="UPA00619">
    <property type="reaction ID" value="UER00676"/>
</dbReference>
<dbReference type="Proteomes" id="UP000008556">
    <property type="component" value="Chromosome"/>
</dbReference>
<dbReference type="GO" id="GO:0004416">
    <property type="term" value="F:hydroxyacylglutathione hydrolase activity"/>
    <property type="evidence" value="ECO:0007669"/>
    <property type="project" value="UniProtKB-UniRule"/>
</dbReference>
<dbReference type="GO" id="GO:0046872">
    <property type="term" value="F:metal ion binding"/>
    <property type="evidence" value="ECO:0007669"/>
    <property type="project" value="UniProtKB-KW"/>
</dbReference>
<dbReference type="GO" id="GO:0019243">
    <property type="term" value="P:methylglyoxal catabolic process to D-lactate via S-lactoyl-glutathione"/>
    <property type="evidence" value="ECO:0007669"/>
    <property type="project" value="InterPro"/>
</dbReference>
<dbReference type="CDD" id="cd07723">
    <property type="entry name" value="hydroxyacylglutathione_hydrolase_MBL-fold"/>
    <property type="match status" value="1"/>
</dbReference>
<dbReference type="Gene3D" id="3.60.15.10">
    <property type="entry name" value="Ribonuclease Z/Hydroxyacylglutathione hydrolase-like"/>
    <property type="match status" value="1"/>
</dbReference>
<dbReference type="HAMAP" id="MF_01374">
    <property type="entry name" value="Glyoxalase_2"/>
    <property type="match status" value="1"/>
</dbReference>
<dbReference type="InterPro" id="IPR035680">
    <property type="entry name" value="Clx_II_MBL"/>
</dbReference>
<dbReference type="InterPro" id="IPR050110">
    <property type="entry name" value="Glyoxalase_II_hydrolase"/>
</dbReference>
<dbReference type="InterPro" id="IPR032282">
    <property type="entry name" value="HAGH_C"/>
</dbReference>
<dbReference type="InterPro" id="IPR017782">
    <property type="entry name" value="Hydroxyacylglutathione_Hdrlase"/>
</dbReference>
<dbReference type="InterPro" id="IPR001279">
    <property type="entry name" value="Metallo-B-lactamas"/>
</dbReference>
<dbReference type="InterPro" id="IPR036866">
    <property type="entry name" value="RibonucZ/Hydroxyglut_hydro"/>
</dbReference>
<dbReference type="NCBIfam" id="TIGR03413">
    <property type="entry name" value="GSH_gloB"/>
    <property type="match status" value="1"/>
</dbReference>
<dbReference type="NCBIfam" id="NF007597">
    <property type="entry name" value="PRK10241.1"/>
    <property type="match status" value="1"/>
</dbReference>
<dbReference type="PANTHER" id="PTHR43705">
    <property type="entry name" value="HYDROXYACYLGLUTATHIONE HYDROLASE"/>
    <property type="match status" value="1"/>
</dbReference>
<dbReference type="PANTHER" id="PTHR43705:SF1">
    <property type="entry name" value="HYDROXYACYLGLUTATHIONE HYDROLASE GLOB"/>
    <property type="match status" value="1"/>
</dbReference>
<dbReference type="Pfam" id="PF16123">
    <property type="entry name" value="HAGH_C"/>
    <property type="match status" value="1"/>
</dbReference>
<dbReference type="Pfam" id="PF00753">
    <property type="entry name" value="Lactamase_B"/>
    <property type="match status" value="1"/>
</dbReference>
<dbReference type="PIRSF" id="PIRSF005457">
    <property type="entry name" value="Glx"/>
    <property type="match status" value="1"/>
</dbReference>
<dbReference type="SMART" id="SM00849">
    <property type="entry name" value="Lactamase_B"/>
    <property type="match status" value="1"/>
</dbReference>
<dbReference type="SUPFAM" id="SSF56281">
    <property type="entry name" value="Metallo-hydrolase/oxidoreductase"/>
    <property type="match status" value="1"/>
</dbReference>
<accession>A9MZ21</accession>